<protein>
    <recommendedName>
        <fullName evidence="1">UPF0336 protein TW736</fullName>
    </recommendedName>
</protein>
<evidence type="ECO:0000255" key="1">
    <source>
        <dbReference type="HAMAP-Rule" id="MF_00799"/>
    </source>
</evidence>
<reference key="1">
    <citation type="journal article" date="2003" name="Lancet">
        <title>Sequencing and analysis of the genome of the Whipple's disease bacterium Tropheryma whipplei.</title>
        <authorList>
            <person name="Bentley S.D."/>
            <person name="Maiwald M."/>
            <person name="Murphy L.D."/>
            <person name="Pallen M.J."/>
            <person name="Yeats C.A."/>
            <person name="Dover L.G."/>
            <person name="Norbertczak H.T."/>
            <person name="Besra G.S."/>
            <person name="Quail M.A."/>
            <person name="Harris D.E."/>
            <person name="von Herbay A."/>
            <person name="Goble A."/>
            <person name="Rutter S."/>
            <person name="Squares R."/>
            <person name="Squares S."/>
            <person name="Barrell B.G."/>
            <person name="Parkhill J."/>
            <person name="Relman D.A."/>
        </authorList>
    </citation>
    <scope>NUCLEOTIDE SEQUENCE [LARGE SCALE GENOMIC DNA]</scope>
    <source>
        <strain>TW08/27</strain>
    </source>
</reference>
<accession>Q83HA5</accession>
<dbReference type="EMBL" id="BX251412">
    <property type="protein sequence ID" value="CAD67395.1"/>
    <property type="molecule type" value="Genomic_DNA"/>
</dbReference>
<dbReference type="RefSeq" id="WP_011096673.1">
    <property type="nucleotide sequence ID" value="NC_004551.1"/>
</dbReference>
<dbReference type="SMR" id="Q83HA5"/>
<dbReference type="GeneID" id="67388515"/>
<dbReference type="KEGG" id="tws:TW736"/>
<dbReference type="HOGENOM" id="CLU_116276_1_1_11"/>
<dbReference type="CDD" id="cd03441">
    <property type="entry name" value="R_hydratase_like"/>
    <property type="match status" value="1"/>
</dbReference>
<dbReference type="Gene3D" id="3.10.129.10">
    <property type="entry name" value="Hotdog Thioesterase"/>
    <property type="match status" value="1"/>
</dbReference>
<dbReference type="HAMAP" id="MF_00799">
    <property type="entry name" value="UPF0336"/>
    <property type="match status" value="1"/>
</dbReference>
<dbReference type="InterPro" id="IPR039569">
    <property type="entry name" value="FAS1-like_DH_region"/>
</dbReference>
<dbReference type="InterPro" id="IPR016709">
    <property type="entry name" value="HadA-like"/>
</dbReference>
<dbReference type="InterPro" id="IPR029069">
    <property type="entry name" value="HotDog_dom_sf"/>
</dbReference>
<dbReference type="Pfam" id="PF13452">
    <property type="entry name" value="FAS1_DH_region"/>
    <property type="match status" value="1"/>
</dbReference>
<dbReference type="PIRSF" id="PIRSF018072">
    <property type="entry name" value="UCP018072"/>
    <property type="match status" value="1"/>
</dbReference>
<dbReference type="SUPFAM" id="SSF54637">
    <property type="entry name" value="Thioesterase/thiol ester dehydrase-isomerase"/>
    <property type="match status" value="1"/>
</dbReference>
<gene>
    <name type="ordered locus">TW736</name>
</gene>
<feature type="chain" id="PRO_0000216148" description="UPF0336 protein TW736">
    <location>
        <begin position="1"/>
        <end position="140"/>
    </location>
</feature>
<proteinExistence type="inferred from homology"/>
<sequence>MTQKVEFPPRHVTEEKLMEFARAVHTQNKIYHSTAAATSSGYPGLVAVPTFGAVWVGQILEYIISSDLNIDYSHIVHGEQHFLYKRPIFAGDILRPILRIKRDRAFGNARQIVLEVTLLSEGSNDDVLVMTITLIVRGKA</sequence>
<comment type="similarity">
    <text evidence="1">Belongs to the UPF0336 family.</text>
</comment>
<name>Y736_TROW8</name>
<organism>
    <name type="scientific">Tropheryma whipplei (strain TW08/27)</name>
    <name type="common">Whipple's bacillus</name>
    <dbReference type="NCBI Taxonomy" id="218496"/>
    <lineage>
        <taxon>Bacteria</taxon>
        <taxon>Bacillati</taxon>
        <taxon>Actinomycetota</taxon>
        <taxon>Actinomycetes</taxon>
        <taxon>Micrococcales</taxon>
        <taxon>Tropherymataceae</taxon>
        <taxon>Tropheryma</taxon>
    </lineage>
</organism>